<gene>
    <name evidence="1" type="primary">rpsT</name>
    <name type="ordered locus">BTH_I0735</name>
</gene>
<comment type="function">
    <text evidence="1">Binds directly to 16S ribosomal RNA.</text>
</comment>
<comment type="similarity">
    <text evidence="1">Belongs to the bacterial ribosomal protein bS20 family.</text>
</comment>
<proteinExistence type="inferred from homology"/>
<reference key="1">
    <citation type="journal article" date="2005" name="BMC Genomics">
        <title>Bacterial genome adaptation to niches: divergence of the potential virulence genes in three Burkholderia species of different survival strategies.</title>
        <authorList>
            <person name="Kim H.S."/>
            <person name="Schell M.A."/>
            <person name="Yu Y."/>
            <person name="Ulrich R.L."/>
            <person name="Sarria S.H."/>
            <person name="Nierman W.C."/>
            <person name="DeShazer D."/>
        </authorList>
    </citation>
    <scope>NUCLEOTIDE SEQUENCE [LARGE SCALE GENOMIC DNA]</scope>
    <source>
        <strain>ATCC 700388 / DSM 13276 / CCUG 48851 / CIP 106301 / E264</strain>
    </source>
</reference>
<accession>Q2T0K8</accession>
<organism>
    <name type="scientific">Burkholderia thailandensis (strain ATCC 700388 / DSM 13276 / CCUG 48851 / CIP 106301 / E264)</name>
    <dbReference type="NCBI Taxonomy" id="271848"/>
    <lineage>
        <taxon>Bacteria</taxon>
        <taxon>Pseudomonadati</taxon>
        <taxon>Pseudomonadota</taxon>
        <taxon>Betaproteobacteria</taxon>
        <taxon>Burkholderiales</taxon>
        <taxon>Burkholderiaceae</taxon>
        <taxon>Burkholderia</taxon>
        <taxon>pseudomallei group</taxon>
    </lineage>
</organism>
<protein>
    <recommendedName>
        <fullName evidence="1">Small ribosomal subunit protein bS20</fullName>
    </recommendedName>
    <alternativeName>
        <fullName evidence="3">30S ribosomal protein S20</fullName>
    </alternativeName>
</protein>
<evidence type="ECO:0000255" key="1">
    <source>
        <dbReference type="HAMAP-Rule" id="MF_00500"/>
    </source>
</evidence>
<evidence type="ECO:0000256" key="2">
    <source>
        <dbReference type="SAM" id="MobiDB-lite"/>
    </source>
</evidence>
<evidence type="ECO:0000305" key="3"/>
<name>RS20_BURTA</name>
<sequence length="92" mass="9847">MANSAQARKRARQAAKANSHNSALRSKFRTAIKAVRKAIDAGDQAKAAELFKAATKTIDTIADKKIVHKNKAARHKSRLSAAVKGLQAQAAQ</sequence>
<feature type="chain" id="PRO_0000236429" description="Small ribosomal subunit protein bS20">
    <location>
        <begin position="1"/>
        <end position="92"/>
    </location>
</feature>
<feature type="region of interest" description="Disordered" evidence="2">
    <location>
        <begin position="1"/>
        <end position="25"/>
    </location>
</feature>
<keyword id="KW-0687">Ribonucleoprotein</keyword>
<keyword id="KW-0689">Ribosomal protein</keyword>
<keyword id="KW-0694">RNA-binding</keyword>
<keyword id="KW-0699">rRNA-binding</keyword>
<dbReference type="EMBL" id="CP000086">
    <property type="protein sequence ID" value="ABC37097.1"/>
    <property type="molecule type" value="Genomic_DNA"/>
</dbReference>
<dbReference type="RefSeq" id="WP_004189743.1">
    <property type="nucleotide sequence ID" value="NZ_CP008785.1"/>
</dbReference>
<dbReference type="SMR" id="Q2T0K8"/>
<dbReference type="GeneID" id="93059378"/>
<dbReference type="KEGG" id="bte:BTH_I0735"/>
<dbReference type="HOGENOM" id="CLU_160655_4_0_4"/>
<dbReference type="Proteomes" id="UP000001930">
    <property type="component" value="Chromosome I"/>
</dbReference>
<dbReference type="GO" id="GO:0005829">
    <property type="term" value="C:cytosol"/>
    <property type="evidence" value="ECO:0007669"/>
    <property type="project" value="TreeGrafter"/>
</dbReference>
<dbReference type="GO" id="GO:0015935">
    <property type="term" value="C:small ribosomal subunit"/>
    <property type="evidence" value="ECO:0007669"/>
    <property type="project" value="TreeGrafter"/>
</dbReference>
<dbReference type="GO" id="GO:0070181">
    <property type="term" value="F:small ribosomal subunit rRNA binding"/>
    <property type="evidence" value="ECO:0007669"/>
    <property type="project" value="TreeGrafter"/>
</dbReference>
<dbReference type="GO" id="GO:0003735">
    <property type="term" value="F:structural constituent of ribosome"/>
    <property type="evidence" value="ECO:0007669"/>
    <property type="project" value="InterPro"/>
</dbReference>
<dbReference type="GO" id="GO:0006412">
    <property type="term" value="P:translation"/>
    <property type="evidence" value="ECO:0007669"/>
    <property type="project" value="UniProtKB-UniRule"/>
</dbReference>
<dbReference type="FunFam" id="1.20.58.110:FF:000001">
    <property type="entry name" value="30S ribosomal protein S20"/>
    <property type="match status" value="1"/>
</dbReference>
<dbReference type="Gene3D" id="1.20.58.110">
    <property type="entry name" value="Ribosomal protein S20"/>
    <property type="match status" value="1"/>
</dbReference>
<dbReference type="HAMAP" id="MF_00500">
    <property type="entry name" value="Ribosomal_bS20"/>
    <property type="match status" value="1"/>
</dbReference>
<dbReference type="InterPro" id="IPR002583">
    <property type="entry name" value="Ribosomal_bS20"/>
</dbReference>
<dbReference type="InterPro" id="IPR036510">
    <property type="entry name" value="Ribosomal_bS20_sf"/>
</dbReference>
<dbReference type="NCBIfam" id="TIGR00029">
    <property type="entry name" value="S20"/>
    <property type="match status" value="1"/>
</dbReference>
<dbReference type="PANTHER" id="PTHR33398">
    <property type="entry name" value="30S RIBOSOMAL PROTEIN S20"/>
    <property type="match status" value="1"/>
</dbReference>
<dbReference type="PANTHER" id="PTHR33398:SF1">
    <property type="entry name" value="SMALL RIBOSOMAL SUBUNIT PROTEIN BS20C"/>
    <property type="match status" value="1"/>
</dbReference>
<dbReference type="Pfam" id="PF01649">
    <property type="entry name" value="Ribosomal_S20p"/>
    <property type="match status" value="1"/>
</dbReference>
<dbReference type="SUPFAM" id="SSF46992">
    <property type="entry name" value="Ribosomal protein S20"/>
    <property type="match status" value="1"/>
</dbReference>